<reference key="1">
    <citation type="journal article" date="2000" name="Nature">
        <title>Complete genome sequence of Pseudomonas aeruginosa PAO1, an opportunistic pathogen.</title>
        <authorList>
            <person name="Stover C.K."/>
            <person name="Pham X.-Q.T."/>
            <person name="Erwin A.L."/>
            <person name="Mizoguchi S.D."/>
            <person name="Warrener P."/>
            <person name="Hickey M.J."/>
            <person name="Brinkman F.S.L."/>
            <person name="Hufnagle W.O."/>
            <person name="Kowalik D.J."/>
            <person name="Lagrou M."/>
            <person name="Garber R.L."/>
            <person name="Goltry L."/>
            <person name="Tolentino E."/>
            <person name="Westbrock-Wadman S."/>
            <person name="Yuan Y."/>
            <person name="Brody L.L."/>
            <person name="Coulter S.N."/>
            <person name="Folger K.R."/>
            <person name="Kas A."/>
            <person name="Larbig K."/>
            <person name="Lim R.M."/>
            <person name="Smith K.A."/>
            <person name="Spencer D.H."/>
            <person name="Wong G.K.-S."/>
            <person name="Wu Z."/>
            <person name="Paulsen I.T."/>
            <person name="Reizer J."/>
            <person name="Saier M.H. Jr."/>
            <person name="Hancock R.E.W."/>
            <person name="Lory S."/>
            <person name="Olson M.V."/>
        </authorList>
    </citation>
    <scope>NUCLEOTIDE SEQUENCE [LARGE SCALE GENOMIC DNA]</scope>
    <source>
        <strain>ATCC 15692 / DSM 22644 / CIP 104116 / JCM 14847 / LMG 12228 / 1C / PRS 101 / PAO1</strain>
    </source>
</reference>
<reference key="2">
    <citation type="thesis" date="2005" institute="Ben-Gurion University" country="Israel">
        <title>Biofouling in water treatment systems: effect of membrane properties on biofilm formation.</title>
        <authorList>
            <person name="Liddor M."/>
        </authorList>
    </citation>
    <scope>PROTEIN SEQUENCE OF 64-77; 84-105; 181-194; 209-221; 242-264 AND 317-337</scope>
    <source>
        <strain>ATCC 33467 / type 1 smooth</strain>
        <strain>ATCC 33468 / type 2 mucoid</strain>
    </source>
</reference>
<feature type="signal peptide" evidence="2">
    <location>
        <begin position="1"/>
        <end position="25"/>
    </location>
</feature>
<feature type="chain" id="PRO_0000002359" description="Glutaminase-asparaginase">
    <location>
        <begin position="26"/>
        <end position="362"/>
    </location>
</feature>
<feature type="domain" description="Asparaginase/glutaminase" evidence="3">
    <location>
        <begin position="35"/>
        <end position="362"/>
    </location>
</feature>
<feature type="active site" description="Acyl-ester intermediate" evidence="4 5">
    <location>
        <position position="45"/>
    </location>
</feature>
<feature type="binding site" evidence="1">
    <location>
        <position position="92"/>
    </location>
    <ligand>
        <name>substrate</name>
    </ligand>
</feature>
<feature type="binding site" evidence="1">
    <location>
        <begin position="125"/>
        <end position="126"/>
    </location>
    <ligand>
        <name>substrate</name>
    </ligand>
</feature>
<keyword id="KW-0903">Direct protein sequencing</keyword>
<keyword id="KW-0378">Hydrolase</keyword>
<keyword id="KW-0574">Periplasm</keyword>
<keyword id="KW-1185">Reference proteome</keyword>
<keyword id="KW-0732">Signal</keyword>
<accession>Q9I407</accession>
<evidence type="ECO:0000250" key="1"/>
<evidence type="ECO:0000255" key="2"/>
<evidence type="ECO:0000255" key="3">
    <source>
        <dbReference type="PROSITE-ProRule" id="PRU01068"/>
    </source>
</evidence>
<evidence type="ECO:0000255" key="4">
    <source>
        <dbReference type="PROSITE-ProRule" id="PRU10099"/>
    </source>
</evidence>
<evidence type="ECO:0000255" key="5">
    <source>
        <dbReference type="PROSITE-ProRule" id="PRU10100"/>
    </source>
</evidence>
<evidence type="ECO:0000305" key="6"/>
<comment type="catalytic activity">
    <reaction>
        <text>L-glutamine + H2O = L-glutamate + NH4(+)</text>
        <dbReference type="Rhea" id="RHEA:15889"/>
        <dbReference type="ChEBI" id="CHEBI:15377"/>
        <dbReference type="ChEBI" id="CHEBI:28938"/>
        <dbReference type="ChEBI" id="CHEBI:29985"/>
        <dbReference type="ChEBI" id="CHEBI:58359"/>
        <dbReference type="EC" id="3.5.1.38"/>
    </reaction>
</comment>
<comment type="catalytic activity">
    <reaction>
        <text>L-asparagine + H2O = L-aspartate + NH4(+)</text>
        <dbReference type="Rhea" id="RHEA:21016"/>
        <dbReference type="ChEBI" id="CHEBI:15377"/>
        <dbReference type="ChEBI" id="CHEBI:28938"/>
        <dbReference type="ChEBI" id="CHEBI:29991"/>
        <dbReference type="ChEBI" id="CHEBI:58048"/>
        <dbReference type="EC" id="3.5.1.38"/>
    </reaction>
</comment>
<comment type="subunit">
    <text evidence="1">Homotetramer.</text>
</comment>
<comment type="subcellular location">
    <subcellularLocation>
        <location evidence="1">Periplasm</location>
    </subcellularLocation>
</comment>
<comment type="similarity">
    <text evidence="6">Belongs to the asparaginase 1 family.</text>
</comment>
<organism>
    <name type="scientific">Pseudomonas aeruginosa (strain ATCC 15692 / DSM 22644 / CIP 104116 / JCM 14847 / LMG 12228 / 1C / PRS 101 / PAO1)</name>
    <dbReference type="NCBI Taxonomy" id="208964"/>
    <lineage>
        <taxon>Bacteria</taxon>
        <taxon>Pseudomonadati</taxon>
        <taxon>Pseudomonadota</taxon>
        <taxon>Gammaproteobacteria</taxon>
        <taxon>Pseudomonadales</taxon>
        <taxon>Pseudomonadaceae</taxon>
        <taxon>Pseudomonas</taxon>
    </lineage>
</organism>
<gene>
    <name type="primary">ansB</name>
    <name type="ordered locus">PA1337</name>
</gene>
<proteinExistence type="evidence at protein level"/>
<dbReference type="EC" id="3.5.1.38"/>
<dbReference type="EMBL" id="AE004091">
    <property type="protein sequence ID" value="AAG04726.1"/>
    <property type="molecule type" value="Genomic_DNA"/>
</dbReference>
<dbReference type="PIR" id="C83478">
    <property type="entry name" value="C83478"/>
</dbReference>
<dbReference type="RefSeq" id="NP_250028.1">
    <property type="nucleotide sequence ID" value="NC_002516.2"/>
</dbReference>
<dbReference type="RefSeq" id="WP_003104093.1">
    <property type="nucleotide sequence ID" value="NZ_QZGE01000005.1"/>
</dbReference>
<dbReference type="SMR" id="Q9I407"/>
<dbReference type="FunCoup" id="Q9I407">
    <property type="interactions" value="156"/>
</dbReference>
<dbReference type="STRING" id="208964.PA1337"/>
<dbReference type="PaxDb" id="208964-PA1337"/>
<dbReference type="DNASU" id="882207"/>
<dbReference type="GeneID" id="882207"/>
<dbReference type="KEGG" id="pae:PA1337"/>
<dbReference type="PATRIC" id="fig|208964.12.peg.1389"/>
<dbReference type="PseudoCAP" id="PA1337"/>
<dbReference type="HOGENOM" id="CLU_019134_1_2_6"/>
<dbReference type="InParanoid" id="Q9I407"/>
<dbReference type="OrthoDB" id="9788068at2"/>
<dbReference type="PhylomeDB" id="Q9I407"/>
<dbReference type="BioCyc" id="PAER208964:G1FZ6-1363-MONOMER"/>
<dbReference type="Proteomes" id="UP000002438">
    <property type="component" value="Chromosome"/>
</dbReference>
<dbReference type="GO" id="GO:0042597">
    <property type="term" value="C:periplasmic space"/>
    <property type="evidence" value="ECO:0000318"/>
    <property type="project" value="GO_Central"/>
</dbReference>
<dbReference type="GO" id="GO:0004067">
    <property type="term" value="F:asparaginase activity"/>
    <property type="evidence" value="ECO:0000318"/>
    <property type="project" value="GO_Central"/>
</dbReference>
<dbReference type="GO" id="GO:0050417">
    <property type="term" value="F:glutamin-(asparagin-)ase activity"/>
    <property type="evidence" value="ECO:0007669"/>
    <property type="project" value="UniProtKB-EC"/>
</dbReference>
<dbReference type="GO" id="GO:0004359">
    <property type="term" value="F:glutaminase activity"/>
    <property type="evidence" value="ECO:0007669"/>
    <property type="project" value="RHEA"/>
</dbReference>
<dbReference type="GO" id="GO:0006530">
    <property type="term" value="P:asparagine catabolic process"/>
    <property type="evidence" value="ECO:0000318"/>
    <property type="project" value="GO_Central"/>
</dbReference>
<dbReference type="CDD" id="cd00411">
    <property type="entry name" value="L-asparaginase_like"/>
    <property type="match status" value="1"/>
</dbReference>
<dbReference type="FunFam" id="3.40.50.1170:FF:000001">
    <property type="entry name" value="L-asparaginase 2"/>
    <property type="match status" value="1"/>
</dbReference>
<dbReference type="Gene3D" id="3.40.50.40">
    <property type="match status" value="1"/>
</dbReference>
<dbReference type="Gene3D" id="3.40.50.1170">
    <property type="entry name" value="L-asparaginase, N-terminal domain"/>
    <property type="match status" value="1"/>
</dbReference>
<dbReference type="InterPro" id="IPR004550">
    <property type="entry name" value="AsnASE_II"/>
</dbReference>
<dbReference type="InterPro" id="IPR036152">
    <property type="entry name" value="Asp/glu_Ase-like_sf"/>
</dbReference>
<dbReference type="InterPro" id="IPR006034">
    <property type="entry name" value="Asparaginase/glutaminase-like"/>
</dbReference>
<dbReference type="InterPro" id="IPR020827">
    <property type="entry name" value="Asparaginase/glutaminase_AS1"/>
</dbReference>
<dbReference type="InterPro" id="IPR027475">
    <property type="entry name" value="Asparaginase/glutaminase_AS2"/>
</dbReference>
<dbReference type="InterPro" id="IPR040919">
    <property type="entry name" value="Asparaginase_C"/>
</dbReference>
<dbReference type="InterPro" id="IPR027473">
    <property type="entry name" value="L-asparaginase_C"/>
</dbReference>
<dbReference type="InterPro" id="IPR027474">
    <property type="entry name" value="L-asparaginase_N"/>
</dbReference>
<dbReference type="InterPro" id="IPR037152">
    <property type="entry name" value="L-asparaginase_N_sf"/>
</dbReference>
<dbReference type="NCBIfam" id="TIGR00520">
    <property type="entry name" value="asnASE_II"/>
    <property type="match status" value="1"/>
</dbReference>
<dbReference type="PANTHER" id="PTHR11707:SF28">
    <property type="entry name" value="60 KDA LYSOPHOSPHOLIPASE"/>
    <property type="match status" value="1"/>
</dbReference>
<dbReference type="PANTHER" id="PTHR11707">
    <property type="entry name" value="L-ASPARAGINASE"/>
    <property type="match status" value="1"/>
</dbReference>
<dbReference type="Pfam" id="PF00710">
    <property type="entry name" value="Asparaginase"/>
    <property type="match status" value="1"/>
</dbReference>
<dbReference type="Pfam" id="PF17763">
    <property type="entry name" value="Asparaginase_C"/>
    <property type="match status" value="1"/>
</dbReference>
<dbReference type="PIRSF" id="PIRSF001220">
    <property type="entry name" value="L-ASNase_gatD"/>
    <property type="match status" value="1"/>
</dbReference>
<dbReference type="PIRSF" id="PIRSF500176">
    <property type="entry name" value="L_ASNase"/>
    <property type="match status" value="1"/>
</dbReference>
<dbReference type="PRINTS" id="PR00139">
    <property type="entry name" value="ASNGLNASE"/>
</dbReference>
<dbReference type="SMART" id="SM00870">
    <property type="entry name" value="Asparaginase"/>
    <property type="match status" value="1"/>
</dbReference>
<dbReference type="SUPFAM" id="SSF53774">
    <property type="entry name" value="Glutaminase/Asparaginase"/>
    <property type="match status" value="1"/>
</dbReference>
<dbReference type="PROSITE" id="PS00144">
    <property type="entry name" value="ASN_GLN_ASE_1"/>
    <property type="match status" value="1"/>
</dbReference>
<dbReference type="PROSITE" id="PS00917">
    <property type="entry name" value="ASN_GLN_ASE_2"/>
    <property type="match status" value="1"/>
</dbReference>
<dbReference type="PROSITE" id="PS51732">
    <property type="entry name" value="ASN_GLN_ASE_3"/>
    <property type="match status" value="1"/>
</dbReference>
<name>ASPQ_PSEAE</name>
<protein>
    <recommendedName>
        <fullName>Glutaminase-asparaginase</fullName>
        <ecNumber>3.5.1.38</ecNumber>
    </recommendedName>
    <alternativeName>
        <fullName>L-ASNase/L-GLNase</fullName>
    </alternativeName>
    <alternativeName>
        <fullName>L-asparagine/L-glutamine amidohydrolase</fullName>
    </alternativeName>
</protein>
<sequence length="362" mass="38644">MKPLLHAFAPGVMALMLLLPQAAQAKEVAPQQKLSNVVILATGGTIAGAGASAANSATYTAAKVPVDQLLASVPQLKDIANVRGEQVFQIASESFTNENLLELGKTVAKLADSDDVDGIVITHGTDTLEETAYFLTLVEHTEKPIVVVGSMRPGTAMSADGMLNLYNAVAVAGDKSARGKGVLITMNDEILSGRDASKMVNIKTEAFKSPWGPLGMVVEGKSYWFRAPVKRHTVNSEFDIKQISALAPVEIAYSYGNVSDTAYKALAQAGAKAIIHAGTGNGSVPARVVPTLQELRKQGVQIIRSSHVNAGGFVLRNAEQPDDKNDWIVAHDLNPQKARILAAVAMTKTQDSKELQRIFWEY</sequence>